<keyword id="KW-0997">Cell inner membrane</keyword>
<keyword id="KW-1003">Cell membrane</keyword>
<keyword id="KW-0472">Membrane</keyword>
<keyword id="KW-0812">Transmembrane</keyword>
<keyword id="KW-1133">Transmembrane helix</keyword>
<feature type="chain" id="PRO_1000136925" description="Universal stress protein B">
    <location>
        <begin position="1"/>
        <end position="111"/>
    </location>
</feature>
<feature type="transmembrane region" description="Helical" evidence="1">
    <location>
        <begin position="1"/>
        <end position="21"/>
    </location>
</feature>
<feature type="transmembrane region" description="Helical" evidence="1">
    <location>
        <begin position="90"/>
        <end position="110"/>
    </location>
</feature>
<protein>
    <recommendedName>
        <fullName evidence="1">Universal stress protein B</fullName>
    </recommendedName>
</protein>
<proteinExistence type="inferred from homology"/>
<reference key="1">
    <citation type="submission" date="2008-02" db="EMBL/GenBank/DDBJ databases">
        <title>Complete sequence of Yersinia pseudotuberculosis YPIII.</title>
        <authorList>
            <consortium name="US DOE Joint Genome Institute"/>
            <person name="Copeland A."/>
            <person name="Lucas S."/>
            <person name="Lapidus A."/>
            <person name="Glavina del Rio T."/>
            <person name="Dalin E."/>
            <person name="Tice H."/>
            <person name="Bruce D."/>
            <person name="Goodwin L."/>
            <person name="Pitluck S."/>
            <person name="Munk A.C."/>
            <person name="Brettin T."/>
            <person name="Detter J.C."/>
            <person name="Han C."/>
            <person name="Tapia R."/>
            <person name="Schmutz J."/>
            <person name="Larimer F."/>
            <person name="Land M."/>
            <person name="Hauser L."/>
            <person name="Challacombe J.F."/>
            <person name="Green L."/>
            <person name="Lindler L.E."/>
            <person name="Nikolich M.P."/>
            <person name="Richardson P."/>
        </authorList>
    </citation>
    <scope>NUCLEOTIDE SEQUENCE [LARGE SCALE GENOMIC DNA]</scope>
    <source>
        <strain>YPIII</strain>
    </source>
</reference>
<name>USPB_YERPY</name>
<organism>
    <name type="scientific">Yersinia pseudotuberculosis serotype O:3 (strain YPIII)</name>
    <dbReference type="NCBI Taxonomy" id="502800"/>
    <lineage>
        <taxon>Bacteria</taxon>
        <taxon>Pseudomonadati</taxon>
        <taxon>Pseudomonadota</taxon>
        <taxon>Gammaproteobacteria</taxon>
        <taxon>Enterobacterales</taxon>
        <taxon>Yersiniaceae</taxon>
        <taxon>Yersinia</taxon>
    </lineage>
</organism>
<accession>B1JHV1</accession>
<gene>
    <name evidence="1" type="primary">uspB</name>
    <name type="ordered locus">YPK_0121</name>
</gene>
<comment type="subcellular location">
    <subcellularLocation>
        <location evidence="1">Cell inner membrane</location>
        <topology evidence="1">Multi-pass membrane protein</topology>
    </subcellularLocation>
</comment>
<comment type="similarity">
    <text evidence="1">Belongs to the universal stress protein B family.</text>
</comment>
<sequence>MISTVALFWALCVVCVVNMARYYSSLRALLVVLRGCDPLLYQYVDGGGFFTSHGQPSKQIRLVGYIFAQRYLDHHDPEFIRRCERLRGQFILTSALCGLVVVSLVALMLWY</sequence>
<evidence type="ECO:0000255" key="1">
    <source>
        <dbReference type="HAMAP-Rule" id="MF_01088"/>
    </source>
</evidence>
<dbReference type="EMBL" id="CP000950">
    <property type="protein sequence ID" value="ACA66434.1"/>
    <property type="molecule type" value="Genomic_DNA"/>
</dbReference>
<dbReference type="RefSeq" id="WP_002209527.1">
    <property type="nucleotide sequence ID" value="NZ_CP009792.1"/>
</dbReference>
<dbReference type="GeneID" id="96663308"/>
<dbReference type="KEGG" id="ypy:YPK_0121"/>
<dbReference type="PATRIC" id="fig|502800.11.peg.725"/>
<dbReference type="GO" id="GO:0005886">
    <property type="term" value="C:plasma membrane"/>
    <property type="evidence" value="ECO:0007669"/>
    <property type="project" value="UniProtKB-SubCell"/>
</dbReference>
<dbReference type="HAMAP" id="MF_01088">
    <property type="entry name" value="UspB"/>
    <property type="match status" value="1"/>
</dbReference>
<dbReference type="InterPro" id="IPR019598">
    <property type="entry name" value="Universal_stress_protein_B"/>
</dbReference>
<dbReference type="NCBIfam" id="NF003435">
    <property type="entry name" value="PRK04960.1"/>
    <property type="match status" value="1"/>
</dbReference>
<dbReference type="Pfam" id="PF10625">
    <property type="entry name" value="UspB"/>
    <property type="match status" value="1"/>
</dbReference>